<gene>
    <name type="primary">SPL13</name>
    <name type="ordered locus">Os07g0505200</name>
    <name type="ordered locus">LOC_Os07g32170</name>
    <name type="ORF">P0430F03.47</name>
</gene>
<sequence length="216" mass="22044">MDRKDKARKNFSSSSSSSAASMAALAAAAAAGDGGAALPSPMEEDKKPRLVASSLAPVAGGGGGGSSSSAAVAAGASSSSSSSSVAAAARRGAGRAGGGAPSGGGGGPRCQVERCGVDLSEAGRYNRRHKVCQTHSKEPVVLVAGLRQRFCQQCSRFHELTEFDDAKRSCRRRLAGHNERRRKSAADTAHGENCRHADQDAGRSHQGTGNPPFQIR</sequence>
<name>SPL13_ORYSJ</name>
<protein>
    <recommendedName>
        <fullName>Squamosa promoter-binding-like protein 13</fullName>
    </recommendedName>
</protein>
<reference key="1">
    <citation type="journal article" date="2005" name="Nature">
        <title>The map-based sequence of the rice genome.</title>
        <authorList>
            <consortium name="International rice genome sequencing project (IRGSP)"/>
        </authorList>
    </citation>
    <scope>NUCLEOTIDE SEQUENCE [LARGE SCALE GENOMIC DNA]</scope>
    <source>
        <strain>cv. Nipponbare</strain>
    </source>
</reference>
<reference key="2">
    <citation type="journal article" date="2008" name="Nucleic Acids Res.">
        <title>The rice annotation project database (RAP-DB): 2008 update.</title>
        <authorList>
            <consortium name="The rice annotation project (RAP)"/>
        </authorList>
    </citation>
    <scope>GENOME REANNOTATION</scope>
    <source>
        <strain>cv. Nipponbare</strain>
    </source>
</reference>
<reference key="3">
    <citation type="journal article" date="2013" name="Rice">
        <title>Improvement of the Oryza sativa Nipponbare reference genome using next generation sequence and optical map data.</title>
        <authorList>
            <person name="Kawahara Y."/>
            <person name="de la Bastide M."/>
            <person name="Hamilton J.P."/>
            <person name="Kanamori H."/>
            <person name="McCombie W.R."/>
            <person name="Ouyang S."/>
            <person name="Schwartz D.C."/>
            <person name="Tanaka T."/>
            <person name="Wu J."/>
            <person name="Zhou S."/>
            <person name="Childs K.L."/>
            <person name="Davidson R.M."/>
            <person name="Lin H."/>
            <person name="Quesada-Ocampo L."/>
            <person name="Vaillancourt B."/>
            <person name="Sakai H."/>
            <person name="Lee S.S."/>
            <person name="Kim J."/>
            <person name="Numa H."/>
            <person name="Itoh T."/>
            <person name="Buell C.R."/>
            <person name="Matsumoto T."/>
        </authorList>
    </citation>
    <scope>GENOME REANNOTATION</scope>
    <source>
        <strain>cv. Nipponbare</strain>
    </source>
</reference>
<reference key="4">
    <citation type="journal article" date="2006" name="Plant Physiol.">
        <title>Genomic organization, differential expression, and interaction of SQUAMOSA promoter-binding-like transcription factors and microRNA156 in rice.</title>
        <authorList>
            <person name="Xie K."/>
            <person name="Wu C."/>
            <person name="Xiong L."/>
        </authorList>
    </citation>
    <scope>TISSUE SPECIFICITY</scope>
    <scope>INDUCTION</scope>
    <scope>GENE FAMILY</scope>
    <scope>NOMENCLATURE</scope>
</reference>
<reference key="5">
    <citation type="journal article" date="2008" name="Gene">
        <title>Comparative study of SBP-box gene family in Arabidopsis and rice.</title>
        <authorList>
            <person name="Yang Z."/>
            <person name="Wang X."/>
            <person name="Gu S."/>
            <person name="Hu Z."/>
            <person name="Xu H."/>
            <person name="Xu C."/>
        </authorList>
    </citation>
    <scope>GENE FAMILY</scope>
</reference>
<proteinExistence type="evidence at transcript level"/>
<accession>Q6Z461</accession>
<accession>Q0D677</accession>
<evidence type="ECO:0000250" key="1"/>
<evidence type="ECO:0000255" key="2"/>
<evidence type="ECO:0000255" key="3">
    <source>
        <dbReference type="PROSITE-ProRule" id="PRU00470"/>
    </source>
</evidence>
<evidence type="ECO:0000256" key="4">
    <source>
        <dbReference type="SAM" id="MobiDB-lite"/>
    </source>
</evidence>
<evidence type="ECO:0000269" key="5">
    <source>
    </source>
</evidence>
<evidence type="ECO:0000305" key="6"/>
<evidence type="ECO:0000305" key="7">
    <source>
    </source>
</evidence>
<organism>
    <name type="scientific">Oryza sativa subsp. japonica</name>
    <name type="common">Rice</name>
    <dbReference type="NCBI Taxonomy" id="39947"/>
    <lineage>
        <taxon>Eukaryota</taxon>
        <taxon>Viridiplantae</taxon>
        <taxon>Streptophyta</taxon>
        <taxon>Embryophyta</taxon>
        <taxon>Tracheophyta</taxon>
        <taxon>Spermatophyta</taxon>
        <taxon>Magnoliopsida</taxon>
        <taxon>Liliopsida</taxon>
        <taxon>Poales</taxon>
        <taxon>Poaceae</taxon>
        <taxon>BOP clade</taxon>
        <taxon>Oryzoideae</taxon>
        <taxon>Oryzeae</taxon>
        <taxon>Oryzinae</taxon>
        <taxon>Oryza</taxon>
        <taxon>Oryza sativa</taxon>
    </lineage>
</organism>
<keyword id="KW-0238">DNA-binding</keyword>
<keyword id="KW-0479">Metal-binding</keyword>
<keyword id="KW-0539">Nucleus</keyword>
<keyword id="KW-1185">Reference proteome</keyword>
<keyword id="KW-0804">Transcription</keyword>
<keyword id="KW-0805">Transcription regulation</keyword>
<keyword id="KW-0862">Zinc</keyword>
<keyword id="KW-0863">Zinc-finger</keyword>
<feature type="chain" id="PRO_0000308240" description="Squamosa promoter-binding-like protein 13">
    <location>
        <begin position="1"/>
        <end position="216"/>
    </location>
</feature>
<feature type="zinc finger region" description="SBP-type" evidence="3">
    <location>
        <begin position="107"/>
        <end position="184"/>
    </location>
</feature>
<feature type="region of interest" description="Disordered" evidence="4">
    <location>
        <begin position="32"/>
        <end position="110"/>
    </location>
</feature>
<feature type="region of interest" description="Disordered" evidence="4">
    <location>
        <begin position="175"/>
        <end position="216"/>
    </location>
</feature>
<feature type="short sequence motif" description="Bipartite nuclear localization signal" evidence="2">
    <location>
        <begin position="167"/>
        <end position="183"/>
    </location>
</feature>
<feature type="compositionally biased region" description="Low complexity" evidence="4">
    <location>
        <begin position="67"/>
        <end position="91"/>
    </location>
</feature>
<feature type="compositionally biased region" description="Gly residues" evidence="4">
    <location>
        <begin position="94"/>
        <end position="108"/>
    </location>
</feature>
<feature type="compositionally biased region" description="Basic and acidic residues" evidence="4">
    <location>
        <begin position="189"/>
        <end position="203"/>
    </location>
</feature>
<feature type="compositionally biased region" description="Polar residues" evidence="4">
    <location>
        <begin position="205"/>
        <end position="216"/>
    </location>
</feature>
<feature type="binding site" evidence="3">
    <location>
        <position position="110"/>
    </location>
    <ligand>
        <name>Zn(2+)</name>
        <dbReference type="ChEBI" id="CHEBI:29105"/>
        <label>1</label>
    </ligand>
</feature>
<feature type="binding site" evidence="3">
    <location>
        <position position="115"/>
    </location>
    <ligand>
        <name>Zn(2+)</name>
        <dbReference type="ChEBI" id="CHEBI:29105"/>
        <label>1</label>
    </ligand>
</feature>
<feature type="binding site" evidence="3">
    <location>
        <position position="132"/>
    </location>
    <ligand>
        <name>Zn(2+)</name>
        <dbReference type="ChEBI" id="CHEBI:29105"/>
        <label>1</label>
    </ligand>
</feature>
<feature type="binding site" evidence="3">
    <location>
        <position position="135"/>
    </location>
    <ligand>
        <name>Zn(2+)</name>
        <dbReference type="ChEBI" id="CHEBI:29105"/>
        <label>1</label>
    </ligand>
</feature>
<feature type="binding site" evidence="3">
    <location>
        <position position="151"/>
    </location>
    <ligand>
        <name>Zn(2+)</name>
        <dbReference type="ChEBI" id="CHEBI:29105"/>
        <label>2</label>
    </ligand>
</feature>
<feature type="binding site" evidence="3">
    <location>
        <position position="154"/>
    </location>
    <ligand>
        <name>Zn(2+)</name>
        <dbReference type="ChEBI" id="CHEBI:29105"/>
        <label>2</label>
    </ligand>
</feature>
<feature type="binding site" evidence="3">
    <location>
        <position position="158"/>
    </location>
    <ligand>
        <name>Zn(2+)</name>
        <dbReference type="ChEBI" id="CHEBI:29105"/>
        <label>2</label>
    </ligand>
</feature>
<feature type="binding site" evidence="3">
    <location>
        <position position="170"/>
    </location>
    <ligand>
        <name>Zn(2+)</name>
        <dbReference type="ChEBI" id="CHEBI:29105"/>
        <label>2</label>
    </ligand>
</feature>
<comment type="function">
    <text evidence="1">Trans-acting factor that binds specifically to the consensus nucleotide sequence 5'-TNCGTACAA-3' (By similarity). May be involved in panicle development.</text>
</comment>
<comment type="subcellular location">
    <subcellularLocation>
        <location evidence="6">Nucleus</location>
    </subcellularLocation>
</comment>
<comment type="tissue specificity">
    <text evidence="5">Ubiquitous.</text>
</comment>
<comment type="induction">
    <text evidence="7">Negatively regulated by microRNAs miR156b and miR156h.</text>
</comment>
<comment type="domain">
    <text evidence="1">The SBP-type zinc finger is required for the binding to DNA.</text>
</comment>
<comment type="sequence caution" evidence="6">
    <conflict type="erroneous gene model prediction">
        <sequence resource="EMBL-CDS" id="BAF21646"/>
    </conflict>
</comment>
<dbReference type="EMBL" id="AP005186">
    <property type="protein sequence ID" value="BAC84006.1"/>
    <property type="molecule type" value="Genomic_DNA"/>
</dbReference>
<dbReference type="EMBL" id="AP008213">
    <property type="protein sequence ID" value="BAF21646.1"/>
    <property type="status" value="ALT_SEQ"/>
    <property type="molecule type" value="Genomic_DNA"/>
</dbReference>
<dbReference type="EMBL" id="AP014963">
    <property type="status" value="NOT_ANNOTATED_CDS"/>
    <property type="molecule type" value="Genomic_DNA"/>
</dbReference>
<dbReference type="RefSeq" id="XP_015645415.1">
    <property type="nucleotide sequence ID" value="XM_015789929.1"/>
</dbReference>
<dbReference type="SMR" id="Q6Z461"/>
<dbReference type="FunCoup" id="Q6Z461">
    <property type="interactions" value="2"/>
</dbReference>
<dbReference type="PaxDb" id="39947-Q6Z461"/>
<dbReference type="EnsemblPlants" id="Os07t0505200-01">
    <property type="protein sequence ID" value="Os07t0505200-01"/>
    <property type="gene ID" value="Os07g0505200"/>
</dbReference>
<dbReference type="Gramene" id="Os07t0505200-01">
    <property type="protein sequence ID" value="Os07t0505200-01"/>
    <property type="gene ID" value="Os07g0505200"/>
</dbReference>
<dbReference type="InParanoid" id="Q6Z461"/>
<dbReference type="OrthoDB" id="514967at2759"/>
<dbReference type="PlantReactome" id="R-OSA-9035605">
    <property type="pathway name" value="Regulation of seed size"/>
</dbReference>
<dbReference type="Proteomes" id="UP000000763">
    <property type="component" value="Chromosome 7"/>
</dbReference>
<dbReference type="Proteomes" id="UP000059680">
    <property type="component" value="Chromosome 7"/>
</dbReference>
<dbReference type="ExpressionAtlas" id="Q6Z461">
    <property type="expression patterns" value="baseline and differential"/>
</dbReference>
<dbReference type="GO" id="GO:0005634">
    <property type="term" value="C:nucleus"/>
    <property type="evidence" value="ECO:0007669"/>
    <property type="project" value="UniProtKB-SubCell"/>
</dbReference>
<dbReference type="GO" id="GO:0003677">
    <property type="term" value="F:DNA binding"/>
    <property type="evidence" value="ECO:0007669"/>
    <property type="project" value="UniProtKB-KW"/>
</dbReference>
<dbReference type="GO" id="GO:0008270">
    <property type="term" value="F:zinc ion binding"/>
    <property type="evidence" value="ECO:0007669"/>
    <property type="project" value="UniProtKB-KW"/>
</dbReference>
<dbReference type="FunFam" id="4.10.1100.10:FF:000001">
    <property type="entry name" value="Squamosa promoter-binding-like protein 14"/>
    <property type="match status" value="1"/>
</dbReference>
<dbReference type="Gene3D" id="4.10.1100.10">
    <property type="entry name" value="Transcription factor, SBP-box domain"/>
    <property type="match status" value="1"/>
</dbReference>
<dbReference type="InterPro" id="IPR044817">
    <property type="entry name" value="SBP-like"/>
</dbReference>
<dbReference type="InterPro" id="IPR004333">
    <property type="entry name" value="SBP_dom"/>
</dbReference>
<dbReference type="InterPro" id="IPR036893">
    <property type="entry name" value="SBP_sf"/>
</dbReference>
<dbReference type="PANTHER" id="PTHR31251:SF209">
    <property type="entry name" value="SQUAMOSA PROMOTER-BINDING-LIKE PROTEIN 13"/>
    <property type="match status" value="1"/>
</dbReference>
<dbReference type="PANTHER" id="PTHR31251">
    <property type="entry name" value="SQUAMOSA PROMOTER-BINDING-LIKE PROTEIN 4"/>
    <property type="match status" value="1"/>
</dbReference>
<dbReference type="Pfam" id="PF03110">
    <property type="entry name" value="SBP"/>
    <property type="match status" value="1"/>
</dbReference>
<dbReference type="SUPFAM" id="SSF103612">
    <property type="entry name" value="SBT domain"/>
    <property type="match status" value="1"/>
</dbReference>
<dbReference type="PROSITE" id="PS51141">
    <property type="entry name" value="ZF_SBP"/>
    <property type="match status" value="1"/>
</dbReference>